<organism>
    <name type="scientific">Chaetosphaeridium globosum</name>
    <name type="common">Charophycean green alga</name>
    <name type="synonym">Herposteiron globosum</name>
    <dbReference type="NCBI Taxonomy" id="96477"/>
    <lineage>
        <taxon>Eukaryota</taxon>
        <taxon>Viridiplantae</taxon>
        <taxon>Streptophyta</taxon>
        <taxon>Coleochaetophyceae</taxon>
        <taxon>Coleochaetales</taxon>
        <taxon>Chaetosphaeridiaceae</taxon>
        <taxon>Chaetosphaeridium</taxon>
    </lineage>
</organism>
<name>NU4C_CHAGL</name>
<dbReference type="EC" id="7.1.1.-" evidence="1"/>
<dbReference type="EMBL" id="AF494278">
    <property type="protein sequence ID" value="AAM96517.1"/>
    <property type="molecule type" value="Genomic_DNA"/>
</dbReference>
<dbReference type="RefSeq" id="NP_683852.1">
    <property type="nucleotide sequence ID" value="NC_004115.1"/>
</dbReference>
<dbReference type="SMR" id="Q8M9U1"/>
<dbReference type="GeneID" id="860799"/>
<dbReference type="GO" id="GO:0009535">
    <property type="term" value="C:chloroplast thylakoid membrane"/>
    <property type="evidence" value="ECO:0007669"/>
    <property type="project" value="UniProtKB-SubCell"/>
</dbReference>
<dbReference type="GO" id="GO:0008137">
    <property type="term" value="F:NADH dehydrogenase (ubiquinone) activity"/>
    <property type="evidence" value="ECO:0007669"/>
    <property type="project" value="InterPro"/>
</dbReference>
<dbReference type="GO" id="GO:0048039">
    <property type="term" value="F:ubiquinone binding"/>
    <property type="evidence" value="ECO:0007669"/>
    <property type="project" value="TreeGrafter"/>
</dbReference>
<dbReference type="GO" id="GO:0042773">
    <property type="term" value="P:ATP synthesis coupled electron transport"/>
    <property type="evidence" value="ECO:0007669"/>
    <property type="project" value="InterPro"/>
</dbReference>
<dbReference type="GO" id="GO:0015990">
    <property type="term" value="P:electron transport coupled proton transport"/>
    <property type="evidence" value="ECO:0007669"/>
    <property type="project" value="TreeGrafter"/>
</dbReference>
<dbReference type="HAMAP" id="MF_00491">
    <property type="entry name" value="NDH1_NuoM"/>
    <property type="match status" value="1"/>
</dbReference>
<dbReference type="InterPro" id="IPR022997">
    <property type="entry name" value="NADH_Q_OxRdtase_chain4"/>
</dbReference>
<dbReference type="InterPro" id="IPR010227">
    <property type="entry name" value="NADH_Q_OxRdtase_chainM/4"/>
</dbReference>
<dbReference type="InterPro" id="IPR003918">
    <property type="entry name" value="NADH_UbQ_OxRdtase"/>
</dbReference>
<dbReference type="InterPro" id="IPR001750">
    <property type="entry name" value="ND/Mrp_TM"/>
</dbReference>
<dbReference type="NCBIfam" id="TIGR01972">
    <property type="entry name" value="NDH_I_M"/>
    <property type="match status" value="1"/>
</dbReference>
<dbReference type="NCBIfam" id="NF009212">
    <property type="entry name" value="PRK12561.1"/>
    <property type="match status" value="1"/>
</dbReference>
<dbReference type="PANTHER" id="PTHR43507:SF21">
    <property type="entry name" value="NAD(P)H-QUINONE OXIDOREDUCTASE CHAIN 4, CHLOROPLASTIC"/>
    <property type="match status" value="1"/>
</dbReference>
<dbReference type="PANTHER" id="PTHR43507">
    <property type="entry name" value="NADH-UBIQUINONE OXIDOREDUCTASE CHAIN 4"/>
    <property type="match status" value="1"/>
</dbReference>
<dbReference type="Pfam" id="PF00361">
    <property type="entry name" value="Proton_antipo_M"/>
    <property type="match status" value="1"/>
</dbReference>
<dbReference type="PRINTS" id="PR01437">
    <property type="entry name" value="NUOXDRDTASE4"/>
</dbReference>
<proteinExistence type="inferred from homology"/>
<comment type="catalytic activity">
    <reaction evidence="1">
        <text>a plastoquinone + NADH + (n+1) H(+)(in) = a plastoquinol + NAD(+) + n H(+)(out)</text>
        <dbReference type="Rhea" id="RHEA:42608"/>
        <dbReference type="Rhea" id="RHEA-COMP:9561"/>
        <dbReference type="Rhea" id="RHEA-COMP:9562"/>
        <dbReference type="ChEBI" id="CHEBI:15378"/>
        <dbReference type="ChEBI" id="CHEBI:17757"/>
        <dbReference type="ChEBI" id="CHEBI:57540"/>
        <dbReference type="ChEBI" id="CHEBI:57945"/>
        <dbReference type="ChEBI" id="CHEBI:62192"/>
    </reaction>
</comment>
<comment type="catalytic activity">
    <reaction evidence="1">
        <text>a plastoquinone + NADPH + (n+1) H(+)(in) = a plastoquinol + NADP(+) + n H(+)(out)</text>
        <dbReference type="Rhea" id="RHEA:42612"/>
        <dbReference type="Rhea" id="RHEA-COMP:9561"/>
        <dbReference type="Rhea" id="RHEA-COMP:9562"/>
        <dbReference type="ChEBI" id="CHEBI:15378"/>
        <dbReference type="ChEBI" id="CHEBI:17757"/>
        <dbReference type="ChEBI" id="CHEBI:57783"/>
        <dbReference type="ChEBI" id="CHEBI:58349"/>
        <dbReference type="ChEBI" id="CHEBI:62192"/>
    </reaction>
</comment>
<comment type="subcellular location">
    <subcellularLocation>
        <location evidence="1">Plastid</location>
        <location evidence="1">Chloroplast thylakoid membrane</location>
        <topology evidence="1">Multi-pass membrane protein</topology>
    </subcellularLocation>
</comment>
<comment type="similarity">
    <text evidence="1">Belongs to the complex I subunit 4 family.</text>
</comment>
<gene>
    <name evidence="1" type="primary">ndhD</name>
</gene>
<reference key="1">
    <citation type="journal article" date="2002" name="Proc. Natl. Acad. Sci. U.S.A.">
        <title>The chloroplast and mitochondrial genome sequences of the charophyte Chaetosphaeridium globosum: insights into the timing of the events that restructured organelle DNAs within the green algal lineage that led to land plants.</title>
        <authorList>
            <person name="Turmel M."/>
            <person name="Otis C."/>
            <person name="Lemieux C."/>
        </authorList>
    </citation>
    <scope>NUCLEOTIDE SEQUENCE [LARGE SCALE GENOMIC DNA]</scope>
    <source>
        <strain>M1311</strain>
    </source>
</reference>
<geneLocation type="chloroplast"/>
<accession>Q8M9U1</accession>
<evidence type="ECO:0000255" key="1">
    <source>
        <dbReference type="HAMAP-Rule" id="MF_00491"/>
    </source>
</evidence>
<sequence>MISDFPLLTFITLFPISAGLLIPFLDKKGNQLVRWYTLIICLIDFVITSYIFIYKYDLNIDTLQLIDDYAWVGPIEFHWKLGVDGLSMPLILLTSFITTLATLSAWPITRNSRLFYFLMLAMYSGQLGVFLSQDILLFFLMWELELIPIYLLLSLWGGKRRLYAATKFILYTAVGSIFILMAGLTMAFYNSNVPLLDFQSLANKQYPLALEIVLYLGFLIAFAVKLPAFPLHTWLPDTHGEAHYSTCMLLAGILIKMGGYGLIRINMELLPNAHVIFSPWIALIGGIQIIYGALTSLGQRNLKRRIAYSSISHMGFVMIGISSFTDLGLSGAMMQMVSHGLIGAGLFFLAGTSYDRIRTLFLDQMGGISTTMPKIFAMFTTCALASLALPGMSGFVAELMVFLGFLKSNAYSFDFIALITFLEAVGIILTPIYLLSMLRQMFYGYRKLKLTNTLLLDASPREIFIMSCLFLPIIGIGIYPNLTIPLWNTKVEAIEQLNVFKSVGFK</sequence>
<keyword id="KW-0150">Chloroplast</keyword>
<keyword id="KW-0472">Membrane</keyword>
<keyword id="KW-0520">NAD</keyword>
<keyword id="KW-0521">NADP</keyword>
<keyword id="KW-0934">Plastid</keyword>
<keyword id="KW-0618">Plastoquinone</keyword>
<keyword id="KW-0874">Quinone</keyword>
<keyword id="KW-0793">Thylakoid</keyword>
<keyword id="KW-1278">Translocase</keyword>
<keyword id="KW-0812">Transmembrane</keyword>
<keyword id="KW-1133">Transmembrane helix</keyword>
<feature type="chain" id="PRO_0000118013" description="NAD(P)H-quinone oxidoreductase chain 4, chloroplastic">
    <location>
        <begin position="1"/>
        <end position="506"/>
    </location>
</feature>
<feature type="transmembrane region" description="Helical" evidence="1">
    <location>
        <begin position="5"/>
        <end position="25"/>
    </location>
</feature>
<feature type="transmembrane region" description="Helical" evidence="1">
    <location>
        <begin position="35"/>
        <end position="55"/>
    </location>
</feature>
<feature type="transmembrane region" description="Helical" evidence="1">
    <location>
        <begin position="88"/>
        <end position="108"/>
    </location>
</feature>
<feature type="transmembrane region" description="Helical" evidence="1">
    <location>
        <begin position="114"/>
        <end position="134"/>
    </location>
</feature>
<feature type="transmembrane region" description="Helical" evidence="1">
    <location>
        <begin position="135"/>
        <end position="155"/>
    </location>
</feature>
<feature type="transmembrane region" description="Helical" evidence="1">
    <location>
        <begin position="168"/>
        <end position="188"/>
    </location>
</feature>
<feature type="transmembrane region" description="Helical" evidence="1">
    <location>
        <begin position="209"/>
        <end position="229"/>
    </location>
</feature>
<feature type="transmembrane region" description="Helical" evidence="1">
    <location>
        <begin position="243"/>
        <end position="263"/>
    </location>
</feature>
<feature type="transmembrane region" description="Helical" evidence="1">
    <location>
        <begin position="275"/>
        <end position="295"/>
    </location>
</feature>
<feature type="transmembrane region" description="Helical" evidence="1">
    <location>
        <begin position="309"/>
        <end position="329"/>
    </location>
</feature>
<feature type="transmembrane region" description="Helical" evidence="1">
    <location>
        <begin position="331"/>
        <end position="351"/>
    </location>
</feature>
<feature type="transmembrane region" description="Helical" evidence="1">
    <location>
        <begin position="386"/>
        <end position="406"/>
    </location>
</feature>
<feature type="transmembrane region" description="Helical" evidence="1">
    <location>
        <begin position="415"/>
        <end position="435"/>
    </location>
</feature>
<feature type="transmembrane region" description="Helical" evidence="1">
    <location>
        <begin position="463"/>
        <end position="483"/>
    </location>
</feature>
<protein>
    <recommendedName>
        <fullName evidence="1">NAD(P)H-quinone oxidoreductase chain 4, chloroplastic</fullName>
        <ecNumber evidence="1">7.1.1.-</ecNumber>
    </recommendedName>
    <alternativeName>
        <fullName evidence="1">NAD(P)H dehydrogenase, chain 4</fullName>
    </alternativeName>
    <alternativeName>
        <fullName evidence="1">NADH-plastoquinone oxidoreductase chain 4</fullName>
    </alternativeName>
</protein>